<reference key="1">
    <citation type="submission" date="2008-01" db="EMBL/GenBank/DDBJ databases">
        <title>Complete sequence of Shewanella halifaxensis HAW-EB4.</title>
        <authorList>
            <consortium name="US DOE Joint Genome Institute"/>
            <person name="Copeland A."/>
            <person name="Lucas S."/>
            <person name="Lapidus A."/>
            <person name="Glavina del Rio T."/>
            <person name="Dalin E."/>
            <person name="Tice H."/>
            <person name="Bruce D."/>
            <person name="Goodwin L."/>
            <person name="Pitluck S."/>
            <person name="Sims D."/>
            <person name="Brettin T."/>
            <person name="Detter J.C."/>
            <person name="Han C."/>
            <person name="Kuske C.R."/>
            <person name="Schmutz J."/>
            <person name="Larimer F."/>
            <person name="Land M."/>
            <person name="Hauser L."/>
            <person name="Kyrpides N."/>
            <person name="Kim E."/>
            <person name="Zhao J.-S."/>
            <person name="Richardson P."/>
        </authorList>
    </citation>
    <scope>NUCLEOTIDE SEQUENCE [LARGE SCALE GENOMIC DNA]</scope>
    <source>
        <strain>HAW-EB4</strain>
    </source>
</reference>
<proteinExistence type="inferred from homology"/>
<accession>B0TIN6</accession>
<protein>
    <recommendedName>
        <fullName evidence="1">Small ribosomal subunit protein bS21</fullName>
    </recommendedName>
    <alternativeName>
        <fullName evidence="2">30S ribosomal protein S21</fullName>
    </alternativeName>
</protein>
<keyword id="KW-0687">Ribonucleoprotein</keyword>
<keyword id="KW-0689">Ribosomal protein</keyword>
<organism>
    <name type="scientific">Shewanella halifaxensis (strain HAW-EB4)</name>
    <dbReference type="NCBI Taxonomy" id="458817"/>
    <lineage>
        <taxon>Bacteria</taxon>
        <taxon>Pseudomonadati</taxon>
        <taxon>Pseudomonadota</taxon>
        <taxon>Gammaproteobacteria</taxon>
        <taxon>Alteromonadales</taxon>
        <taxon>Shewanellaceae</taxon>
        <taxon>Shewanella</taxon>
    </lineage>
</organism>
<dbReference type="EMBL" id="CP000931">
    <property type="protein sequence ID" value="ABZ75581.1"/>
    <property type="molecule type" value="Genomic_DNA"/>
</dbReference>
<dbReference type="RefSeq" id="WP_006080725.1">
    <property type="nucleotide sequence ID" value="NC_010334.1"/>
</dbReference>
<dbReference type="SMR" id="B0TIN6"/>
<dbReference type="STRING" id="458817.Shal_1007"/>
<dbReference type="GeneID" id="94729004"/>
<dbReference type="KEGG" id="shl:Shal_1007"/>
<dbReference type="eggNOG" id="COG0828">
    <property type="taxonomic scope" value="Bacteria"/>
</dbReference>
<dbReference type="HOGENOM" id="CLU_159258_1_0_6"/>
<dbReference type="OrthoDB" id="9799244at2"/>
<dbReference type="Proteomes" id="UP000001317">
    <property type="component" value="Chromosome"/>
</dbReference>
<dbReference type="GO" id="GO:1990904">
    <property type="term" value="C:ribonucleoprotein complex"/>
    <property type="evidence" value="ECO:0007669"/>
    <property type="project" value="UniProtKB-KW"/>
</dbReference>
<dbReference type="GO" id="GO:0005840">
    <property type="term" value="C:ribosome"/>
    <property type="evidence" value="ECO:0007669"/>
    <property type="project" value="UniProtKB-KW"/>
</dbReference>
<dbReference type="GO" id="GO:0003735">
    <property type="term" value="F:structural constituent of ribosome"/>
    <property type="evidence" value="ECO:0007669"/>
    <property type="project" value="InterPro"/>
</dbReference>
<dbReference type="GO" id="GO:0006412">
    <property type="term" value="P:translation"/>
    <property type="evidence" value="ECO:0007669"/>
    <property type="project" value="UniProtKB-UniRule"/>
</dbReference>
<dbReference type="Gene3D" id="1.20.5.1150">
    <property type="entry name" value="Ribosomal protein S8"/>
    <property type="match status" value="1"/>
</dbReference>
<dbReference type="HAMAP" id="MF_00358">
    <property type="entry name" value="Ribosomal_bS21"/>
    <property type="match status" value="1"/>
</dbReference>
<dbReference type="InterPro" id="IPR001911">
    <property type="entry name" value="Ribosomal_bS21"/>
</dbReference>
<dbReference type="InterPro" id="IPR018278">
    <property type="entry name" value="Ribosomal_bS21_CS"/>
</dbReference>
<dbReference type="InterPro" id="IPR038380">
    <property type="entry name" value="Ribosomal_bS21_sf"/>
</dbReference>
<dbReference type="NCBIfam" id="TIGR00030">
    <property type="entry name" value="S21p"/>
    <property type="match status" value="1"/>
</dbReference>
<dbReference type="PANTHER" id="PTHR21109">
    <property type="entry name" value="MITOCHONDRIAL 28S RIBOSOMAL PROTEIN S21"/>
    <property type="match status" value="1"/>
</dbReference>
<dbReference type="PANTHER" id="PTHR21109:SF22">
    <property type="entry name" value="SMALL RIBOSOMAL SUBUNIT PROTEIN BS21"/>
    <property type="match status" value="1"/>
</dbReference>
<dbReference type="Pfam" id="PF01165">
    <property type="entry name" value="Ribosomal_S21"/>
    <property type="match status" value="1"/>
</dbReference>
<dbReference type="PRINTS" id="PR00976">
    <property type="entry name" value="RIBOSOMALS21"/>
</dbReference>
<dbReference type="PROSITE" id="PS01181">
    <property type="entry name" value="RIBOSOMAL_S21"/>
    <property type="match status" value="1"/>
</dbReference>
<name>RS21_SHEHH</name>
<evidence type="ECO:0000255" key="1">
    <source>
        <dbReference type="HAMAP-Rule" id="MF_00358"/>
    </source>
</evidence>
<evidence type="ECO:0000305" key="2"/>
<gene>
    <name evidence="1" type="primary">rpsU</name>
    <name type="ordered locus">Shal_1007</name>
</gene>
<sequence>MPIIKVRENEPFDVALRRFKRSCEKAGILADVRAREFYEKPTTARKRAKAAAVKRLAKKLSRENARRVRLY</sequence>
<feature type="chain" id="PRO_1000079420" description="Small ribosomal subunit protein bS21">
    <location>
        <begin position="1"/>
        <end position="71"/>
    </location>
</feature>
<comment type="similarity">
    <text evidence="1">Belongs to the bacterial ribosomal protein bS21 family.</text>
</comment>